<keyword id="KW-0560">Oxidoreductase</keyword>
<keyword id="KW-1185">Reference proteome</keyword>
<comment type="function">
    <text evidence="3">Possible component of hydrogenase 4.</text>
</comment>
<comment type="similarity">
    <text evidence="2">To E.coli HycH.</text>
</comment>
<accession>P77453</accession>
<accession>P76566</accession>
<reference key="1">
    <citation type="journal article" date="1997" name="Microbiology">
        <title>A 12-cistron Escherichia coli operon (hyf) encoding a putative proton-translocating formate hydrogenlyase system.</title>
        <authorList>
            <person name="Andrews S.C."/>
            <person name="Berks B.C."/>
            <person name="McClay J."/>
            <person name="Ambler A."/>
            <person name="Quail M.A."/>
            <person name="Golby P."/>
            <person name="Guest J.R."/>
        </authorList>
    </citation>
    <scope>NUCLEOTIDE SEQUENCE [GENOMIC DNA]</scope>
    <scope>POSSIBLE FUNCTION</scope>
    <source>
        <strain>K12</strain>
    </source>
</reference>
<reference key="2">
    <citation type="journal article" date="1997" name="DNA Res.">
        <title>Construction of a contiguous 874-kb sequence of the Escherichia coli-K12 genome corresponding to 50.0-68.8 min on the linkage map and analysis of its sequence features.</title>
        <authorList>
            <person name="Yamamoto Y."/>
            <person name="Aiba H."/>
            <person name="Baba T."/>
            <person name="Hayashi K."/>
            <person name="Inada T."/>
            <person name="Isono K."/>
            <person name="Itoh T."/>
            <person name="Kimura S."/>
            <person name="Kitagawa M."/>
            <person name="Makino K."/>
            <person name="Miki T."/>
            <person name="Mitsuhashi N."/>
            <person name="Mizobuchi K."/>
            <person name="Mori H."/>
            <person name="Nakade S."/>
            <person name="Nakamura Y."/>
            <person name="Nashimoto H."/>
            <person name="Oshima T."/>
            <person name="Oyama S."/>
            <person name="Saito N."/>
            <person name="Sampei G."/>
            <person name="Satoh Y."/>
            <person name="Sivasundaram S."/>
            <person name="Tagami H."/>
            <person name="Takahashi H."/>
            <person name="Takeda J."/>
            <person name="Takemoto K."/>
            <person name="Uehara K."/>
            <person name="Wada C."/>
            <person name="Yamagata S."/>
            <person name="Horiuchi T."/>
        </authorList>
    </citation>
    <scope>NUCLEOTIDE SEQUENCE [LARGE SCALE GENOMIC DNA]</scope>
    <source>
        <strain>K12 / W3110 / ATCC 27325 / DSM 5911</strain>
    </source>
</reference>
<reference key="3">
    <citation type="journal article" date="1997" name="Science">
        <title>The complete genome sequence of Escherichia coli K-12.</title>
        <authorList>
            <person name="Blattner F.R."/>
            <person name="Plunkett G. III"/>
            <person name="Bloch C.A."/>
            <person name="Perna N.T."/>
            <person name="Burland V."/>
            <person name="Riley M."/>
            <person name="Collado-Vides J."/>
            <person name="Glasner J.D."/>
            <person name="Rode C.K."/>
            <person name="Mayhew G.F."/>
            <person name="Gregor J."/>
            <person name="Davis N.W."/>
            <person name="Kirkpatrick H.A."/>
            <person name="Goeden M.A."/>
            <person name="Rose D.J."/>
            <person name="Mau B."/>
            <person name="Shao Y."/>
        </authorList>
    </citation>
    <scope>NUCLEOTIDE SEQUENCE [LARGE SCALE GENOMIC DNA]</scope>
    <source>
        <strain>K12 / MG1655 / ATCC 47076</strain>
    </source>
</reference>
<reference key="4">
    <citation type="journal article" date="2006" name="Mol. Syst. Biol.">
        <title>Highly accurate genome sequences of Escherichia coli K-12 strains MG1655 and W3110.</title>
        <authorList>
            <person name="Hayashi K."/>
            <person name="Morooka N."/>
            <person name="Yamamoto Y."/>
            <person name="Fujita K."/>
            <person name="Isono K."/>
            <person name="Choi S."/>
            <person name="Ohtsubo E."/>
            <person name="Baba T."/>
            <person name="Wanner B.L."/>
            <person name="Mori H."/>
            <person name="Horiuchi T."/>
        </authorList>
    </citation>
    <scope>NUCLEOTIDE SEQUENCE [LARGE SCALE GENOMIC DNA]</scope>
    <source>
        <strain>K12 / W3110 / ATCC 27325 / DSM 5911</strain>
    </source>
</reference>
<evidence type="ECO:0000303" key="1">
    <source>
    </source>
</evidence>
<evidence type="ECO:0000305" key="2"/>
<evidence type="ECO:0000305" key="3">
    <source>
    </source>
</evidence>
<dbReference type="EC" id="1.-.-.-"/>
<dbReference type="EMBL" id="M63654">
    <property type="protein sequence ID" value="AAB88572.1"/>
    <property type="molecule type" value="Genomic_DNA"/>
</dbReference>
<dbReference type="EMBL" id="U00096">
    <property type="protein sequence ID" value="AAC75543.2"/>
    <property type="molecule type" value="Genomic_DNA"/>
</dbReference>
<dbReference type="EMBL" id="AP009048">
    <property type="protein sequence ID" value="BAA16378.1"/>
    <property type="molecule type" value="Genomic_DNA"/>
</dbReference>
<dbReference type="PIR" id="A65025">
    <property type="entry name" value="A65025"/>
</dbReference>
<dbReference type="RefSeq" id="NP_416985.4">
    <property type="nucleotide sequence ID" value="NC_000913.3"/>
</dbReference>
<dbReference type="RefSeq" id="WP_001326580.1">
    <property type="nucleotide sequence ID" value="NZ_LN832404.1"/>
</dbReference>
<dbReference type="BioGRID" id="4261430">
    <property type="interactions" value="8"/>
</dbReference>
<dbReference type="FunCoup" id="P77453">
    <property type="interactions" value="280"/>
</dbReference>
<dbReference type="STRING" id="511145.b2490"/>
<dbReference type="PaxDb" id="511145-b2490"/>
<dbReference type="EnsemblBacteria" id="AAC75543">
    <property type="protein sequence ID" value="AAC75543"/>
    <property type="gene ID" value="b2490"/>
</dbReference>
<dbReference type="GeneID" id="947713"/>
<dbReference type="KEGG" id="ecj:JW2475"/>
<dbReference type="KEGG" id="eco:b2490"/>
<dbReference type="KEGG" id="ecoc:C3026_13815"/>
<dbReference type="PATRIC" id="fig|1411691.4.peg.4249"/>
<dbReference type="EchoBASE" id="EB3970"/>
<dbReference type="eggNOG" id="ENOG502ZBMB">
    <property type="taxonomic scope" value="Bacteria"/>
</dbReference>
<dbReference type="HOGENOM" id="CLU_121340_0_0_6"/>
<dbReference type="InParanoid" id="P77453"/>
<dbReference type="OMA" id="ITIDHTH"/>
<dbReference type="OrthoDB" id="3173483at2"/>
<dbReference type="PhylomeDB" id="P77453"/>
<dbReference type="BioCyc" id="EcoCyc:G7307-MONOMER"/>
<dbReference type="PRO" id="PR:P77453"/>
<dbReference type="Proteomes" id="UP000000625">
    <property type="component" value="Chromosome"/>
</dbReference>
<dbReference type="GO" id="GO:0016491">
    <property type="term" value="F:oxidoreductase activity"/>
    <property type="evidence" value="ECO:0007669"/>
    <property type="project" value="UniProtKB-KW"/>
</dbReference>
<dbReference type="InterPro" id="IPR010005">
    <property type="entry name" value="Formate_DH_maturation_HycH"/>
</dbReference>
<dbReference type="NCBIfam" id="NF011664">
    <property type="entry name" value="PRK15084.1"/>
    <property type="match status" value="1"/>
</dbReference>
<dbReference type="Pfam" id="PF07450">
    <property type="entry name" value="HycH"/>
    <property type="match status" value="1"/>
</dbReference>
<organism>
    <name type="scientific">Escherichia coli (strain K12)</name>
    <dbReference type="NCBI Taxonomy" id="83333"/>
    <lineage>
        <taxon>Bacteria</taxon>
        <taxon>Pseudomonadati</taxon>
        <taxon>Pseudomonadota</taxon>
        <taxon>Gammaproteobacteria</taxon>
        <taxon>Enterobacterales</taxon>
        <taxon>Enterobacteriaceae</taxon>
        <taxon>Escherichia</taxon>
    </lineage>
</organism>
<feature type="chain" id="PRO_0000084118" description="Hydrogenase-4 component J">
    <location>
        <begin position="1"/>
        <end position="137"/>
    </location>
</feature>
<sequence length="137" mass="15577">MTEECGEIVFWTLRKKFVASSDEMPEHSSQVMYYSLAIGHHVGVIDCLNVAFRCPLTEYEDWLALVEEEQARRKMLGVMTFGEIVIDASHTALLTRAFAPLADDATSVWQARSIQFIHLLDEIVQEPAIYLMARKIA</sequence>
<proteinExistence type="predicted"/>
<protein>
    <recommendedName>
        <fullName>Hydrogenase-4 component J</fullName>
        <ecNumber>1.-.-.-</ecNumber>
    </recommendedName>
</protein>
<gene>
    <name evidence="1" type="primary">hyfJ</name>
    <name type="ordered locus">b2490</name>
    <name type="ordered locus">JW2475</name>
</gene>
<name>HYFJ_ECOLI</name>